<proteinExistence type="evidence at transcript level"/>
<evidence type="ECO:0000250" key="1">
    <source>
        <dbReference type="UniProtKB" id="Q96D46"/>
    </source>
</evidence>
<evidence type="ECO:0000256" key="2">
    <source>
        <dbReference type="SAM" id="MobiDB-lite"/>
    </source>
</evidence>
<evidence type="ECO:0000305" key="3"/>
<dbReference type="EMBL" id="BC090467">
    <property type="protein sequence ID" value="AAH90467.1"/>
    <property type="molecule type" value="mRNA"/>
</dbReference>
<dbReference type="RefSeq" id="NP_001013587.1">
    <property type="nucleotide sequence ID" value="NM_001013569.2"/>
</dbReference>
<dbReference type="SMR" id="Q5BLF0"/>
<dbReference type="FunCoup" id="Q5BLF0">
    <property type="interactions" value="2327"/>
</dbReference>
<dbReference type="STRING" id="7955.ENSDARP00000012858"/>
<dbReference type="PaxDb" id="7955-ENSDARP00000012858"/>
<dbReference type="Ensembl" id="ENSDART00000021299">
    <property type="protein sequence ID" value="ENSDARP00000012858"/>
    <property type="gene ID" value="ENSDARG00000015676"/>
</dbReference>
<dbReference type="GeneID" id="541444"/>
<dbReference type="KEGG" id="dre:541444"/>
<dbReference type="AGR" id="ZFIN:ZDB-GENE-050320-149"/>
<dbReference type="CTD" id="51068"/>
<dbReference type="ZFIN" id="ZDB-GENE-050320-149">
    <property type="gene designation" value="nmd3"/>
</dbReference>
<dbReference type="eggNOG" id="KOG2613">
    <property type="taxonomic scope" value="Eukaryota"/>
</dbReference>
<dbReference type="HOGENOM" id="CLU_027444_2_0_1"/>
<dbReference type="InParanoid" id="Q5BLF0"/>
<dbReference type="OMA" id="VILVRKH"/>
<dbReference type="OrthoDB" id="203821at2759"/>
<dbReference type="PhylomeDB" id="Q5BLF0"/>
<dbReference type="TreeFam" id="TF105744"/>
<dbReference type="PRO" id="PR:Q5BLF0"/>
<dbReference type="Proteomes" id="UP000000437">
    <property type="component" value="Chromosome 15"/>
</dbReference>
<dbReference type="Bgee" id="ENSDARG00000015676">
    <property type="expression patterns" value="Expressed in gastrula and 31 other cell types or tissues"/>
</dbReference>
<dbReference type="GO" id="GO:0005737">
    <property type="term" value="C:cytoplasm"/>
    <property type="evidence" value="ECO:0000318"/>
    <property type="project" value="GO_Central"/>
</dbReference>
<dbReference type="GO" id="GO:0005634">
    <property type="term" value="C:nucleus"/>
    <property type="evidence" value="ECO:0000318"/>
    <property type="project" value="GO_Central"/>
</dbReference>
<dbReference type="GO" id="GO:0043023">
    <property type="term" value="F:ribosomal large subunit binding"/>
    <property type="evidence" value="ECO:0000318"/>
    <property type="project" value="GO_Central"/>
</dbReference>
<dbReference type="GO" id="GO:0015031">
    <property type="term" value="P:protein transport"/>
    <property type="evidence" value="ECO:0007669"/>
    <property type="project" value="UniProtKB-KW"/>
</dbReference>
<dbReference type="GO" id="GO:0000055">
    <property type="term" value="P:ribosomal large subunit export from nucleus"/>
    <property type="evidence" value="ECO:0000318"/>
    <property type="project" value="GO_Central"/>
</dbReference>
<dbReference type="InterPro" id="IPR039768">
    <property type="entry name" value="Nmd3"/>
</dbReference>
<dbReference type="InterPro" id="IPR007064">
    <property type="entry name" value="Nmd3_N"/>
</dbReference>
<dbReference type="InterPro" id="IPR048898">
    <property type="entry name" value="NMD3_OB"/>
</dbReference>
<dbReference type="InterPro" id="IPR048899">
    <property type="entry name" value="NMD_SH3"/>
</dbReference>
<dbReference type="PANTHER" id="PTHR12746:SF2">
    <property type="entry name" value="60S RIBOSOMAL EXPORT PROTEIN NMD3"/>
    <property type="match status" value="1"/>
</dbReference>
<dbReference type="PANTHER" id="PTHR12746">
    <property type="entry name" value="NONSENSE-MEDIATED MRNA DECAY PROTEIN 3"/>
    <property type="match status" value="1"/>
</dbReference>
<dbReference type="Pfam" id="PF04981">
    <property type="entry name" value="NMD3"/>
    <property type="match status" value="1"/>
</dbReference>
<dbReference type="Pfam" id="PF21192">
    <property type="entry name" value="NMD3_OB"/>
    <property type="match status" value="1"/>
</dbReference>
<dbReference type="Pfam" id="PF21193">
    <property type="entry name" value="NMD_SH3"/>
    <property type="match status" value="1"/>
</dbReference>
<comment type="function">
    <text evidence="1">Acts as an adapter for the XPO1/CRM1-mediated export of the 60S ribosomal subunit.</text>
</comment>
<comment type="subunit">
    <text evidence="1">Associates with pre-60S ribosomal particles.</text>
</comment>
<comment type="subcellular location">
    <subcellularLocation>
        <location evidence="1">Cytoplasm</location>
    </subcellularLocation>
    <subcellularLocation>
        <location evidence="1">Nucleus</location>
    </subcellularLocation>
    <text evidence="1">Shuttles between the nucleus/nucleolus and the cytoplasm in a XPO1/CRM1-dependent manner.</text>
</comment>
<comment type="similarity">
    <text evidence="3">Belongs to the NMD3 family.</text>
</comment>
<name>NMD3_DANRE</name>
<protein>
    <recommendedName>
        <fullName>60S ribosomal export protein NMD3</fullName>
    </recommendedName>
</protein>
<organism>
    <name type="scientific">Danio rerio</name>
    <name type="common">Zebrafish</name>
    <name type="synonym">Brachydanio rerio</name>
    <dbReference type="NCBI Taxonomy" id="7955"/>
    <lineage>
        <taxon>Eukaryota</taxon>
        <taxon>Metazoa</taxon>
        <taxon>Chordata</taxon>
        <taxon>Craniata</taxon>
        <taxon>Vertebrata</taxon>
        <taxon>Euteleostomi</taxon>
        <taxon>Actinopterygii</taxon>
        <taxon>Neopterygii</taxon>
        <taxon>Teleostei</taxon>
        <taxon>Ostariophysi</taxon>
        <taxon>Cypriniformes</taxon>
        <taxon>Danionidae</taxon>
        <taxon>Danioninae</taxon>
        <taxon>Danio</taxon>
    </lineage>
</organism>
<keyword id="KW-0963">Cytoplasm</keyword>
<keyword id="KW-0539">Nucleus</keyword>
<keyword id="KW-0653">Protein transport</keyword>
<keyword id="KW-1185">Reference proteome</keyword>
<keyword id="KW-0813">Transport</keyword>
<accession>Q5BLF0</accession>
<gene>
    <name type="primary">nmd3</name>
    <name type="synonym">nmd3l</name>
</gene>
<reference key="1">
    <citation type="submission" date="2005-02" db="EMBL/GenBank/DDBJ databases">
        <authorList>
            <consortium name="NIH - Zebrafish Gene Collection (ZGC) project"/>
        </authorList>
    </citation>
    <scope>NUCLEOTIDE SEQUENCE [LARGE SCALE MRNA]</scope>
    <source>
        <tissue>Embryo</tissue>
    </source>
</reference>
<feature type="chain" id="PRO_0000323564" description="60S ribosomal export protein NMD3">
    <location>
        <begin position="1"/>
        <end position="505"/>
    </location>
</feature>
<feature type="region of interest" description="Disordered" evidence="2">
    <location>
        <begin position="467"/>
        <end position="505"/>
    </location>
</feature>
<sequence length="505" mass="57731">MEYMQAPPSSSHGNILCCTCGVPIPPNPANMCVSCLRTQVDISEGIPKQVTIHFCRQCERYLQPPGSWVQCALESRELLALCLKKLKASMSKVRLIDAGFLWTEPHSKRIKIKLTIQKEVMNGAILQQVFTVEFVVQGQMCEDCHRVEAKDFWKAVVQVRQKTVHKKTFYYLEQLILKHKLHQNTVRIKEIHEGIDFYYATKQHAQKMVDFLQCTVPCRSKASQRLISHDVHSNTYNYKSTFSVEIVPVCKDNVVCLSPRLAQSLGNMGQVCVCVRVTSSIHLIDPNTLQIAEVDGSTFWRHPFNSLCSPRQLEEFIIMDIDIIRDQRLGAGAGLKSNKHTLAEVWVQKTSEMDSSHQYHCRTFMGHLLNIGDLVLGFDFANANINDEFLNKMNPQHVPDVVLIKKSYDRMKRARKRVWKLKEMDREKDAADTDDERQYTEFLEDLEEDEMLRKNINIFRDASKIPVEESDTDDDGAPRISLAEMLEDLSLSDATGGEGADMMTD</sequence>